<organism>
    <name type="scientific">Bordetella petrii (strain ATCC BAA-461 / DSM 12804 / CCUG 43448)</name>
    <dbReference type="NCBI Taxonomy" id="340100"/>
    <lineage>
        <taxon>Bacteria</taxon>
        <taxon>Pseudomonadati</taxon>
        <taxon>Pseudomonadota</taxon>
        <taxon>Betaproteobacteria</taxon>
        <taxon>Burkholderiales</taxon>
        <taxon>Alcaligenaceae</taxon>
        <taxon>Bordetella</taxon>
    </lineage>
</organism>
<sequence length="109" mass="11754">METTAIIRGVHISAQKTRLVADLIRGKSVAQALNILTFSPKKAAGILKKAVESAIANAEHNDGADIDELKITTIFVDKAQSMKRFSARAKGRGNRIEKQTCHITVKVGA</sequence>
<proteinExistence type="inferred from homology"/>
<gene>
    <name evidence="1" type="primary">rplV</name>
    <name type="ordered locus">Bpet4947</name>
</gene>
<comment type="function">
    <text evidence="1">This protein binds specifically to 23S rRNA; its binding is stimulated by other ribosomal proteins, e.g. L4, L17, and L20. It is important during the early stages of 50S assembly. It makes multiple contacts with different domains of the 23S rRNA in the assembled 50S subunit and ribosome (By similarity).</text>
</comment>
<comment type="function">
    <text evidence="1">The globular domain of the protein is located near the polypeptide exit tunnel on the outside of the subunit, while an extended beta-hairpin is found that lines the wall of the exit tunnel in the center of the 70S ribosome.</text>
</comment>
<comment type="subunit">
    <text evidence="1">Part of the 50S ribosomal subunit.</text>
</comment>
<comment type="similarity">
    <text evidence="1">Belongs to the universal ribosomal protein uL22 family.</text>
</comment>
<accession>A9IIZ3</accession>
<name>RL22_BORPD</name>
<reference key="1">
    <citation type="journal article" date="2008" name="BMC Genomics">
        <title>The missing link: Bordetella petrii is endowed with both the metabolic versatility of environmental bacteria and virulence traits of pathogenic Bordetellae.</title>
        <authorList>
            <person name="Gross R."/>
            <person name="Guzman C.A."/>
            <person name="Sebaihia M."/>
            <person name="Martin dos Santos V.A.P."/>
            <person name="Pieper D.H."/>
            <person name="Koebnik R."/>
            <person name="Lechner M."/>
            <person name="Bartels D."/>
            <person name="Buhrmester J."/>
            <person name="Choudhuri J.V."/>
            <person name="Ebensen T."/>
            <person name="Gaigalat L."/>
            <person name="Herrmann S."/>
            <person name="Khachane A.N."/>
            <person name="Larisch C."/>
            <person name="Link S."/>
            <person name="Linke B."/>
            <person name="Meyer F."/>
            <person name="Mormann S."/>
            <person name="Nakunst D."/>
            <person name="Rueckert C."/>
            <person name="Schneiker-Bekel S."/>
            <person name="Schulze K."/>
            <person name="Voerholter F.-J."/>
            <person name="Yevsa T."/>
            <person name="Engle J.T."/>
            <person name="Goldman W.E."/>
            <person name="Puehler A."/>
            <person name="Goebel U.B."/>
            <person name="Goesmann A."/>
            <person name="Bloecker H."/>
            <person name="Kaiser O."/>
            <person name="Martinez-Arias R."/>
        </authorList>
    </citation>
    <scope>NUCLEOTIDE SEQUENCE [LARGE SCALE GENOMIC DNA]</scope>
    <source>
        <strain>ATCC BAA-461 / DSM 12804 / CCUG 43448</strain>
    </source>
</reference>
<dbReference type="EMBL" id="AM902716">
    <property type="protein sequence ID" value="CAP45299.1"/>
    <property type="molecule type" value="Genomic_DNA"/>
</dbReference>
<dbReference type="SMR" id="A9IIZ3"/>
<dbReference type="STRING" id="94624.Bpet4947"/>
<dbReference type="KEGG" id="bpt:Bpet4947"/>
<dbReference type="eggNOG" id="COG0091">
    <property type="taxonomic scope" value="Bacteria"/>
</dbReference>
<dbReference type="Proteomes" id="UP000001225">
    <property type="component" value="Chromosome"/>
</dbReference>
<dbReference type="GO" id="GO:0022625">
    <property type="term" value="C:cytosolic large ribosomal subunit"/>
    <property type="evidence" value="ECO:0007669"/>
    <property type="project" value="TreeGrafter"/>
</dbReference>
<dbReference type="GO" id="GO:0019843">
    <property type="term" value="F:rRNA binding"/>
    <property type="evidence" value="ECO:0007669"/>
    <property type="project" value="UniProtKB-UniRule"/>
</dbReference>
<dbReference type="GO" id="GO:0003735">
    <property type="term" value="F:structural constituent of ribosome"/>
    <property type="evidence" value="ECO:0007669"/>
    <property type="project" value="InterPro"/>
</dbReference>
<dbReference type="GO" id="GO:0006412">
    <property type="term" value="P:translation"/>
    <property type="evidence" value="ECO:0007669"/>
    <property type="project" value="UniProtKB-UniRule"/>
</dbReference>
<dbReference type="CDD" id="cd00336">
    <property type="entry name" value="Ribosomal_L22"/>
    <property type="match status" value="1"/>
</dbReference>
<dbReference type="FunFam" id="3.90.470.10:FF:000001">
    <property type="entry name" value="50S ribosomal protein L22"/>
    <property type="match status" value="1"/>
</dbReference>
<dbReference type="Gene3D" id="3.90.470.10">
    <property type="entry name" value="Ribosomal protein L22/L17"/>
    <property type="match status" value="1"/>
</dbReference>
<dbReference type="HAMAP" id="MF_01331_B">
    <property type="entry name" value="Ribosomal_uL22_B"/>
    <property type="match status" value="1"/>
</dbReference>
<dbReference type="InterPro" id="IPR001063">
    <property type="entry name" value="Ribosomal_uL22"/>
</dbReference>
<dbReference type="InterPro" id="IPR005727">
    <property type="entry name" value="Ribosomal_uL22_bac/chlpt-type"/>
</dbReference>
<dbReference type="InterPro" id="IPR047867">
    <property type="entry name" value="Ribosomal_uL22_bac/org-type"/>
</dbReference>
<dbReference type="InterPro" id="IPR018260">
    <property type="entry name" value="Ribosomal_uL22_CS"/>
</dbReference>
<dbReference type="InterPro" id="IPR036394">
    <property type="entry name" value="Ribosomal_uL22_sf"/>
</dbReference>
<dbReference type="NCBIfam" id="TIGR01044">
    <property type="entry name" value="rplV_bact"/>
    <property type="match status" value="1"/>
</dbReference>
<dbReference type="PANTHER" id="PTHR13501">
    <property type="entry name" value="CHLOROPLAST 50S RIBOSOMAL PROTEIN L22-RELATED"/>
    <property type="match status" value="1"/>
</dbReference>
<dbReference type="PANTHER" id="PTHR13501:SF8">
    <property type="entry name" value="LARGE RIBOSOMAL SUBUNIT PROTEIN UL22M"/>
    <property type="match status" value="1"/>
</dbReference>
<dbReference type="Pfam" id="PF00237">
    <property type="entry name" value="Ribosomal_L22"/>
    <property type="match status" value="1"/>
</dbReference>
<dbReference type="SUPFAM" id="SSF54843">
    <property type="entry name" value="Ribosomal protein L22"/>
    <property type="match status" value="1"/>
</dbReference>
<dbReference type="PROSITE" id="PS00464">
    <property type="entry name" value="RIBOSOMAL_L22"/>
    <property type="match status" value="1"/>
</dbReference>
<evidence type="ECO:0000255" key="1">
    <source>
        <dbReference type="HAMAP-Rule" id="MF_01331"/>
    </source>
</evidence>
<evidence type="ECO:0000305" key="2"/>
<protein>
    <recommendedName>
        <fullName evidence="1">Large ribosomal subunit protein uL22</fullName>
    </recommendedName>
    <alternativeName>
        <fullName evidence="2">50S ribosomal protein L22</fullName>
    </alternativeName>
</protein>
<feature type="chain" id="PRO_1000142236" description="Large ribosomal subunit protein uL22">
    <location>
        <begin position="1"/>
        <end position="109"/>
    </location>
</feature>
<keyword id="KW-0687">Ribonucleoprotein</keyword>
<keyword id="KW-0689">Ribosomal protein</keyword>
<keyword id="KW-0694">RNA-binding</keyword>
<keyword id="KW-0699">rRNA-binding</keyword>